<accession>B5ENA2</accession>
<feature type="chain" id="PRO_1000137654" description="Chaperone protein DnaJ">
    <location>
        <begin position="1"/>
        <end position="375"/>
    </location>
</feature>
<feature type="domain" description="J" evidence="1">
    <location>
        <begin position="5"/>
        <end position="70"/>
    </location>
</feature>
<feature type="repeat" description="CXXCXGXG motif">
    <location>
        <begin position="146"/>
        <end position="153"/>
    </location>
</feature>
<feature type="repeat" description="CXXCXGXG motif">
    <location>
        <begin position="163"/>
        <end position="170"/>
    </location>
</feature>
<feature type="repeat" description="CXXCXGXG motif">
    <location>
        <begin position="185"/>
        <end position="192"/>
    </location>
</feature>
<feature type="repeat" description="CXXCXGXG motif">
    <location>
        <begin position="199"/>
        <end position="206"/>
    </location>
</feature>
<feature type="zinc finger region" description="CR-type" evidence="1">
    <location>
        <begin position="133"/>
        <end position="211"/>
    </location>
</feature>
<feature type="binding site" evidence="1">
    <location>
        <position position="146"/>
    </location>
    <ligand>
        <name>Zn(2+)</name>
        <dbReference type="ChEBI" id="CHEBI:29105"/>
        <label>1</label>
    </ligand>
</feature>
<feature type="binding site" evidence="1">
    <location>
        <position position="149"/>
    </location>
    <ligand>
        <name>Zn(2+)</name>
        <dbReference type="ChEBI" id="CHEBI:29105"/>
        <label>1</label>
    </ligand>
</feature>
<feature type="binding site" evidence="1">
    <location>
        <position position="163"/>
    </location>
    <ligand>
        <name>Zn(2+)</name>
        <dbReference type="ChEBI" id="CHEBI:29105"/>
        <label>2</label>
    </ligand>
</feature>
<feature type="binding site" evidence="1">
    <location>
        <position position="166"/>
    </location>
    <ligand>
        <name>Zn(2+)</name>
        <dbReference type="ChEBI" id="CHEBI:29105"/>
        <label>2</label>
    </ligand>
</feature>
<feature type="binding site" evidence="1">
    <location>
        <position position="185"/>
    </location>
    <ligand>
        <name>Zn(2+)</name>
        <dbReference type="ChEBI" id="CHEBI:29105"/>
        <label>2</label>
    </ligand>
</feature>
<feature type="binding site" evidence="1">
    <location>
        <position position="188"/>
    </location>
    <ligand>
        <name>Zn(2+)</name>
        <dbReference type="ChEBI" id="CHEBI:29105"/>
        <label>2</label>
    </ligand>
</feature>
<feature type="binding site" evidence="1">
    <location>
        <position position="199"/>
    </location>
    <ligand>
        <name>Zn(2+)</name>
        <dbReference type="ChEBI" id="CHEBI:29105"/>
        <label>1</label>
    </ligand>
</feature>
<feature type="binding site" evidence="1">
    <location>
        <position position="202"/>
    </location>
    <ligand>
        <name>Zn(2+)</name>
        <dbReference type="ChEBI" id="CHEBI:29105"/>
        <label>1</label>
    </ligand>
</feature>
<name>DNAJ_ACIF5</name>
<protein>
    <recommendedName>
        <fullName evidence="1">Chaperone protein DnaJ</fullName>
    </recommendedName>
</protein>
<reference key="1">
    <citation type="submission" date="2008-08" db="EMBL/GenBank/DDBJ databases">
        <title>Complete sequence of Acidithiobacillus ferrooxidans ATCC 53993.</title>
        <authorList>
            <person name="Lucas S."/>
            <person name="Copeland A."/>
            <person name="Lapidus A."/>
            <person name="Glavina del Rio T."/>
            <person name="Dalin E."/>
            <person name="Tice H."/>
            <person name="Bruce D."/>
            <person name="Goodwin L."/>
            <person name="Pitluck S."/>
            <person name="Sims D."/>
            <person name="Brettin T."/>
            <person name="Detter J.C."/>
            <person name="Han C."/>
            <person name="Kuske C.R."/>
            <person name="Larimer F."/>
            <person name="Land M."/>
            <person name="Hauser L."/>
            <person name="Kyrpides N."/>
            <person name="Lykidis A."/>
            <person name="Borole A.P."/>
        </authorList>
    </citation>
    <scope>NUCLEOTIDE SEQUENCE [LARGE SCALE GENOMIC DNA]</scope>
    <source>
        <strain>ATCC 53993 / BNL-5-31</strain>
    </source>
</reference>
<sequence>MATRDYYEVLEISRTADDGEIKKSYRRLAMRYHPDRNPDDASAEERFKEISAAYEVLSDPQKRQAYDRFGHAGVNGGGGGPGAGFGGGGGGFGDVFSDLFEQAFGGGFRGQDSGRGADLRYELELTLEEAALGKEVTIQIPSSATCEVCRGSGAKPGSAVEDCATCGGRGQVRMVQGFFSVTRPCPQCNGSGKVIKEPCTNCHGHGRVRRNRDLQVKVPAGVDTGDRIRLNGEGEAGERGGPAGDLYIQVRVLPHALFERDGDDLHCAVPVQFTTMAMGGELEVPTLTGRAKVQIAPGTQSGAVFRLRGKGIKGVRSKLNGDLHCQLQVEVPVHLSARQKELLEEFAREGGDNIQHPQQESWWNKAKDFFDRMGL</sequence>
<gene>
    <name evidence="1" type="primary">dnaJ</name>
    <name type="ordered locus">Lferr_2290</name>
</gene>
<keyword id="KW-0143">Chaperone</keyword>
<keyword id="KW-0963">Cytoplasm</keyword>
<keyword id="KW-0235">DNA replication</keyword>
<keyword id="KW-0479">Metal-binding</keyword>
<keyword id="KW-0677">Repeat</keyword>
<keyword id="KW-0346">Stress response</keyword>
<keyword id="KW-0862">Zinc</keyword>
<keyword id="KW-0863">Zinc-finger</keyword>
<evidence type="ECO:0000255" key="1">
    <source>
        <dbReference type="HAMAP-Rule" id="MF_01152"/>
    </source>
</evidence>
<proteinExistence type="inferred from homology"/>
<organism>
    <name type="scientific">Acidithiobacillus ferrooxidans (strain ATCC 53993 / BNL-5-31)</name>
    <name type="common">Leptospirillum ferrooxidans (ATCC 53993)</name>
    <dbReference type="NCBI Taxonomy" id="380394"/>
    <lineage>
        <taxon>Bacteria</taxon>
        <taxon>Pseudomonadati</taxon>
        <taxon>Pseudomonadota</taxon>
        <taxon>Acidithiobacillia</taxon>
        <taxon>Acidithiobacillales</taxon>
        <taxon>Acidithiobacillaceae</taxon>
        <taxon>Acidithiobacillus</taxon>
    </lineage>
</organism>
<comment type="function">
    <text evidence="1">Participates actively in the response to hyperosmotic and heat shock by preventing the aggregation of stress-denatured proteins and by disaggregating proteins, also in an autonomous, DnaK-independent fashion. Unfolded proteins bind initially to DnaJ; upon interaction with the DnaJ-bound protein, DnaK hydrolyzes its bound ATP, resulting in the formation of a stable complex. GrpE releases ADP from DnaK; ATP binding to DnaK triggers the release of the substrate protein, thus completing the reaction cycle. Several rounds of ATP-dependent interactions between DnaJ, DnaK and GrpE are required for fully efficient folding. Also involved, together with DnaK and GrpE, in the DNA replication of plasmids through activation of initiation proteins.</text>
</comment>
<comment type="cofactor">
    <cofactor evidence="1">
        <name>Zn(2+)</name>
        <dbReference type="ChEBI" id="CHEBI:29105"/>
    </cofactor>
    <text evidence="1">Binds 2 Zn(2+) ions per monomer.</text>
</comment>
<comment type="subunit">
    <text evidence="1">Homodimer.</text>
</comment>
<comment type="subcellular location">
    <subcellularLocation>
        <location evidence="1">Cytoplasm</location>
    </subcellularLocation>
</comment>
<comment type="domain">
    <text evidence="1">The J domain is necessary and sufficient to stimulate DnaK ATPase activity. Zinc center 1 plays an important role in the autonomous, DnaK-independent chaperone activity of DnaJ. Zinc center 2 is essential for interaction with DnaK and for DnaJ activity.</text>
</comment>
<comment type="similarity">
    <text evidence="1">Belongs to the DnaJ family.</text>
</comment>
<dbReference type="EMBL" id="CP001132">
    <property type="protein sequence ID" value="ACH84491.1"/>
    <property type="molecule type" value="Genomic_DNA"/>
</dbReference>
<dbReference type="RefSeq" id="WP_012537323.1">
    <property type="nucleotide sequence ID" value="NC_011206.1"/>
</dbReference>
<dbReference type="SMR" id="B5ENA2"/>
<dbReference type="GeneID" id="65281709"/>
<dbReference type="KEGG" id="afe:Lferr_2290"/>
<dbReference type="eggNOG" id="COG0484">
    <property type="taxonomic scope" value="Bacteria"/>
</dbReference>
<dbReference type="HOGENOM" id="CLU_017633_0_7_6"/>
<dbReference type="GO" id="GO:0005737">
    <property type="term" value="C:cytoplasm"/>
    <property type="evidence" value="ECO:0007669"/>
    <property type="project" value="UniProtKB-SubCell"/>
</dbReference>
<dbReference type="GO" id="GO:0005524">
    <property type="term" value="F:ATP binding"/>
    <property type="evidence" value="ECO:0007669"/>
    <property type="project" value="InterPro"/>
</dbReference>
<dbReference type="GO" id="GO:0031072">
    <property type="term" value="F:heat shock protein binding"/>
    <property type="evidence" value="ECO:0007669"/>
    <property type="project" value="InterPro"/>
</dbReference>
<dbReference type="GO" id="GO:0051082">
    <property type="term" value="F:unfolded protein binding"/>
    <property type="evidence" value="ECO:0007669"/>
    <property type="project" value="UniProtKB-UniRule"/>
</dbReference>
<dbReference type="GO" id="GO:0008270">
    <property type="term" value="F:zinc ion binding"/>
    <property type="evidence" value="ECO:0007669"/>
    <property type="project" value="UniProtKB-UniRule"/>
</dbReference>
<dbReference type="GO" id="GO:0051085">
    <property type="term" value="P:chaperone cofactor-dependent protein refolding"/>
    <property type="evidence" value="ECO:0007669"/>
    <property type="project" value="TreeGrafter"/>
</dbReference>
<dbReference type="GO" id="GO:0006260">
    <property type="term" value="P:DNA replication"/>
    <property type="evidence" value="ECO:0007669"/>
    <property type="project" value="UniProtKB-KW"/>
</dbReference>
<dbReference type="GO" id="GO:0042026">
    <property type="term" value="P:protein refolding"/>
    <property type="evidence" value="ECO:0007669"/>
    <property type="project" value="TreeGrafter"/>
</dbReference>
<dbReference type="GO" id="GO:0009408">
    <property type="term" value="P:response to heat"/>
    <property type="evidence" value="ECO:0007669"/>
    <property type="project" value="InterPro"/>
</dbReference>
<dbReference type="CDD" id="cd06257">
    <property type="entry name" value="DnaJ"/>
    <property type="match status" value="1"/>
</dbReference>
<dbReference type="CDD" id="cd10747">
    <property type="entry name" value="DnaJ_C"/>
    <property type="match status" value="1"/>
</dbReference>
<dbReference type="CDD" id="cd10719">
    <property type="entry name" value="DnaJ_zf"/>
    <property type="match status" value="1"/>
</dbReference>
<dbReference type="FunFam" id="1.10.287.110:FF:000034">
    <property type="entry name" value="Chaperone protein DnaJ"/>
    <property type="match status" value="1"/>
</dbReference>
<dbReference type="FunFam" id="2.10.230.10:FF:000002">
    <property type="entry name" value="Molecular chaperone DnaJ"/>
    <property type="match status" value="1"/>
</dbReference>
<dbReference type="FunFam" id="2.60.260.20:FF:000004">
    <property type="entry name" value="Molecular chaperone DnaJ"/>
    <property type="match status" value="1"/>
</dbReference>
<dbReference type="Gene3D" id="1.10.287.110">
    <property type="entry name" value="DnaJ domain"/>
    <property type="match status" value="1"/>
</dbReference>
<dbReference type="Gene3D" id="2.10.230.10">
    <property type="entry name" value="Heat shock protein DnaJ, cysteine-rich domain"/>
    <property type="match status" value="1"/>
</dbReference>
<dbReference type="Gene3D" id="2.60.260.20">
    <property type="entry name" value="Urease metallochaperone UreE, N-terminal domain"/>
    <property type="match status" value="2"/>
</dbReference>
<dbReference type="HAMAP" id="MF_01152">
    <property type="entry name" value="DnaJ"/>
    <property type="match status" value="1"/>
</dbReference>
<dbReference type="InterPro" id="IPR012724">
    <property type="entry name" value="DnaJ"/>
</dbReference>
<dbReference type="InterPro" id="IPR002939">
    <property type="entry name" value="DnaJ_C"/>
</dbReference>
<dbReference type="InterPro" id="IPR001623">
    <property type="entry name" value="DnaJ_domain"/>
</dbReference>
<dbReference type="InterPro" id="IPR018253">
    <property type="entry name" value="DnaJ_domain_CS"/>
</dbReference>
<dbReference type="InterPro" id="IPR008971">
    <property type="entry name" value="HSP40/DnaJ_pept-bd"/>
</dbReference>
<dbReference type="InterPro" id="IPR001305">
    <property type="entry name" value="HSP_DnaJ_Cys-rich_dom"/>
</dbReference>
<dbReference type="InterPro" id="IPR036410">
    <property type="entry name" value="HSP_DnaJ_Cys-rich_dom_sf"/>
</dbReference>
<dbReference type="InterPro" id="IPR036869">
    <property type="entry name" value="J_dom_sf"/>
</dbReference>
<dbReference type="NCBIfam" id="TIGR02349">
    <property type="entry name" value="DnaJ_bact"/>
    <property type="match status" value="1"/>
</dbReference>
<dbReference type="NCBIfam" id="NF008035">
    <property type="entry name" value="PRK10767.1"/>
    <property type="match status" value="1"/>
</dbReference>
<dbReference type="PANTHER" id="PTHR43096:SF48">
    <property type="entry name" value="CHAPERONE PROTEIN DNAJ"/>
    <property type="match status" value="1"/>
</dbReference>
<dbReference type="PANTHER" id="PTHR43096">
    <property type="entry name" value="DNAJ HOMOLOG 1, MITOCHONDRIAL-RELATED"/>
    <property type="match status" value="1"/>
</dbReference>
<dbReference type="Pfam" id="PF00226">
    <property type="entry name" value="DnaJ"/>
    <property type="match status" value="1"/>
</dbReference>
<dbReference type="Pfam" id="PF01556">
    <property type="entry name" value="DnaJ_C"/>
    <property type="match status" value="1"/>
</dbReference>
<dbReference type="Pfam" id="PF00684">
    <property type="entry name" value="DnaJ_CXXCXGXG"/>
    <property type="match status" value="1"/>
</dbReference>
<dbReference type="PRINTS" id="PR00625">
    <property type="entry name" value="JDOMAIN"/>
</dbReference>
<dbReference type="SMART" id="SM00271">
    <property type="entry name" value="DnaJ"/>
    <property type="match status" value="1"/>
</dbReference>
<dbReference type="SUPFAM" id="SSF46565">
    <property type="entry name" value="Chaperone J-domain"/>
    <property type="match status" value="1"/>
</dbReference>
<dbReference type="SUPFAM" id="SSF57938">
    <property type="entry name" value="DnaJ/Hsp40 cysteine-rich domain"/>
    <property type="match status" value="1"/>
</dbReference>
<dbReference type="SUPFAM" id="SSF49493">
    <property type="entry name" value="HSP40/DnaJ peptide-binding domain"/>
    <property type="match status" value="2"/>
</dbReference>
<dbReference type="PROSITE" id="PS00636">
    <property type="entry name" value="DNAJ_1"/>
    <property type="match status" value="1"/>
</dbReference>
<dbReference type="PROSITE" id="PS50076">
    <property type="entry name" value="DNAJ_2"/>
    <property type="match status" value="1"/>
</dbReference>
<dbReference type="PROSITE" id="PS51188">
    <property type="entry name" value="ZF_CR"/>
    <property type="match status" value="1"/>
</dbReference>